<feature type="chain" id="PRO_1000187158" description="D-ribose pyranase">
    <location>
        <begin position="1"/>
        <end position="139"/>
    </location>
</feature>
<feature type="active site" description="Proton donor" evidence="1">
    <location>
        <position position="20"/>
    </location>
</feature>
<feature type="binding site" evidence="1">
    <location>
        <position position="28"/>
    </location>
    <ligand>
        <name>substrate</name>
    </ligand>
</feature>
<feature type="binding site" evidence="1">
    <location>
        <position position="106"/>
    </location>
    <ligand>
        <name>substrate</name>
    </ligand>
</feature>
<feature type="binding site" evidence="1">
    <location>
        <begin position="128"/>
        <end position="130"/>
    </location>
    <ligand>
        <name>substrate</name>
    </ligand>
</feature>
<protein>
    <recommendedName>
        <fullName evidence="1">D-ribose pyranase</fullName>
        <ecNumber evidence="1">5.4.99.62</ecNumber>
    </recommendedName>
</protein>
<gene>
    <name evidence="1" type="primary">rbsD</name>
    <name type="ordered locus">SeAg_B4108</name>
</gene>
<proteinExistence type="inferred from homology"/>
<name>RBSD_SALA4</name>
<dbReference type="EC" id="5.4.99.62" evidence="1"/>
<dbReference type="EMBL" id="CP001138">
    <property type="protein sequence ID" value="ACH53005.1"/>
    <property type="molecule type" value="Genomic_DNA"/>
</dbReference>
<dbReference type="RefSeq" id="WP_000715942.1">
    <property type="nucleotide sequence ID" value="NC_011149.1"/>
</dbReference>
<dbReference type="SMR" id="B5EZ14"/>
<dbReference type="KEGG" id="sea:SeAg_B4108"/>
<dbReference type="HOGENOM" id="CLU_135498_0_0_6"/>
<dbReference type="UniPathway" id="UPA00916">
    <property type="reaction ID" value="UER00888"/>
</dbReference>
<dbReference type="Proteomes" id="UP000008819">
    <property type="component" value="Chromosome"/>
</dbReference>
<dbReference type="GO" id="GO:0005829">
    <property type="term" value="C:cytosol"/>
    <property type="evidence" value="ECO:0007669"/>
    <property type="project" value="TreeGrafter"/>
</dbReference>
<dbReference type="GO" id="GO:0062193">
    <property type="term" value="F:D-ribose pyranase activity"/>
    <property type="evidence" value="ECO:0007669"/>
    <property type="project" value="UniProtKB-EC"/>
</dbReference>
<dbReference type="GO" id="GO:0016872">
    <property type="term" value="F:intramolecular lyase activity"/>
    <property type="evidence" value="ECO:0007669"/>
    <property type="project" value="UniProtKB-UniRule"/>
</dbReference>
<dbReference type="GO" id="GO:0048029">
    <property type="term" value="F:monosaccharide binding"/>
    <property type="evidence" value="ECO:0007669"/>
    <property type="project" value="InterPro"/>
</dbReference>
<dbReference type="GO" id="GO:0019303">
    <property type="term" value="P:D-ribose catabolic process"/>
    <property type="evidence" value="ECO:0007669"/>
    <property type="project" value="UniProtKB-UniRule"/>
</dbReference>
<dbReference type="FunFam" id="3.40.1650.10:FF:000002">
    <property type="entry name" value="D-ribose pyranase"/>
    <property type="match status" value="1"/>
</dbReference>
<dbReference type="Gene3D" id="3.40.1650.10">
    <property type="entry name" value="RbsD-like domain"/>
    <property type="match status" value="1"/>
</dbReference>
<dbReference type="HAMAP" id="MF_01661">
    <property type="entry name" value="D_rib_pyranase"/>
    <property type="match status" value="1"/>
</dbReference>
<dbReference type="InterPro" id="IPR023064">
    <property type="entry name" value="D-ribose_pyranase"/>
</dbReference>
<dbReference type="InterPro" id="IPR023750">
    <property type="entry name" value="RbsD-like_sf"/>
</dbReference>
<dbReference type="InterPro" id="IPR007721">
    <property type="entry name" value="RbsD_FucU"/>
</dbReference>
<dbReference type="NCBIfam" id="NF008761">
    <property type="entry name" value="PRK11797.1"/>
    <property type="match status" value="1"/>
</dbReference>
<dbReference type="PANTHER" id="PTHR37831">
    <property type="entry name" value="D-RIBOSE PYRANASE"/>
    <property type="match status" value="1"/>
</dbReference>
<dbReference type="PANTHER" id="PTHR37831:SF1">
    <property type="entry name" value="D-RIBOSE PYRANASE"/>
    <property type="match status" value="1"/>
</dbReference>
<dbReference type="Pfam" id="PF05025">
    <property type="entry name" value="RbsD_FucU"/>
    <property type="match status" value="1"/>
</dbReference>
<dbReference type="SUPFAM" id="SSF102546">
    <property type="entry name" value="RbsD-like"/>
    <property type="match status" value="1"/>
</dbReference>
<comment type="function">
    <text evidence="1">Catalyzes the interconversion of beta-pyran and beta-furan forms of D-ribose.</text>
</comment>
<comment type="catalytic activity">
    <reaction evidence="1">
        <text>beta-D-ribopyranose = beta-D-ribofuranose</text>
        <dbReference type="Rhea" id="RHEA:25432"/>
        <dbReference type="ChEBI" id="CHEBI:27476"/>
        <dbReference type="ChEBI" id="CHEBI:47002"/>
        <dbReference type="EC" id="5.4.99.62"/>
    </reaction>
</comment>
<comment type="pathway">
    <text evidence="1">Carbohydrate metabolism; D-ribose degradation; D-ribose 5-phosphate from beta-D-ribopyranose: step 1/2.</text>
</comment>
<comment type="subunit">
    <text evidence="1">Homodecamer.</text>
</comment>
<comment type="subcellular location">
    <subcellularLocation>
        <location evidence="1">Cytoplasm</location>
    </subcellularLocation>
</comment>
<comment type="similarity">
    <text evidence="1">Belongs to the RbsD / FucU family. RbsD subfamily.</text>
</comment>
<reference key="1">
    <citation type="journal article" date="2011" name="J. Bacteriol.">
        <title>Comparative genomics of 28 Salmonella enterica isolates: evidence for CRISPR-mediated adaptive sublineage evolution.</title>
        <authorList>
            <person name="Fricke W.F."/>
            <person name="Mammel M.K."/>
            <person name="McDermott P.F."/>
            <person name="Tartera C."/>
            <person name="White D.G."/>
            <person name="Leclerc J.E."/>
            <person name="Ravel J."/>
            <person name="Cebula T.A."/>
        </authorList>
    </citation>
    <scope>NUCLEOTIDE SEQUENCE [LARGE SCALE GENOMIC DNA]</scope>
    <source>
        <strain>SL483</strain>
    </source>
</reference>
<accession>B5EZ14</accession>
<organism>
    <name type="scientific">Salmonella agona (strain SL483)</name>
    <dbReference type="NCBI Taxonomy" id="454166"/>
    <lineage>
        <taxon>Bacteria</taxon>
        <taxon>Pseudomonadati</taxon>
        <taxon>Pseudomonadota</taxon>
        <taxon>Gammaproteobacteria</taxon>
        <taxon>Enterobacterales</taxon>
        <taxon>Enterobacteriaceae</taxon>
        <taxon>Salmonella</taxon>
    </lineage>
</organism>
<keyword id="KW-0119">Carbohydrate metabolism</keyword>
<keyword id="KW-0963">Cytoplasm</keyword>
<keyword id="KW-0413">Isomerase</keyword>
<sequence>MKKGTVLNSEISSVISRLGHTDTLVVCDAGLPIPNSTARIDIALTQGVPSFMQVVDVVTREMQVEAAILATEIKQQNPQLHETLLTHLEQLQQHQGNTIKISYTTHEQFKKLTADSQAVIRSGECSPYANVILCAGVTF</sequence>
<evidence type="ECO:0000255" key="1">
    <source>
        <dbReference type="HAMAP-Rule" id="MF_01661"/>
    </source>
</evidence>